<dbReference type="EC" id="3.1.4.17"/>
<dbReference type="EMBL" id="FO081787">
    <property type="protein sequence ID" value="CCD73546.1"/>
    <property type="molecule type" value="Genomic_DNA"/>
</dbReference>
<dbReference type="RefSeq" id="NP_001370828.1">
    <property type="nucleotide sequence ID" value="NM_001383315.1"/>
</dbReference>
<dbReference type="RefSeq" id="NP_490787.1">
    <property type="nucleotide sequence ID" value="NM_058386.1"/>
</dbReference>
<dbReference type="SMR" id="Q9N2V9"/>
<dbReference type="BioGRID" id="55379">
    <property type="interactions" value="2"/>
</dbReference>
<dbReference type="FunCoup" id="Q9N2V9">
    <property type="interactions" value="722"/>
</dbReference>
<dbReference type="IntAct" id="Q9N2V9">
    <property type="interactions" value="1"/>
</dbReference>
<dbReference type="STRING" id="6239.Y95B8A.10a.1"/>
<dbReference type="iPTMnet" id="Q9N2V9"/>
<dbReference type="PaxDb" id="6239-Y95B8A.10a"/>
<dbReference type="PeptideAtlas" id="Q9N2V9"/>
<dbReference type="EnsemblMetazoa" id="Y95B8A.10a.1">
    <property type="protein sequence ID" value="Y95B8A.10a.1"/>
    <property type="gene ID" value="WBGene00022389"/>
</dbReference>
<dbReference type="GeneID" id="190808"/>
<dbReference type="UCSC" id="Y95B8A.10a">
    <property type="organism name" value="c. elegans"/>
</dbReference>
<dbReference type="AGR" id="WB:WBGene00022389"/>
<dbReference type="WormBase" id="Y95B8A.10a">
    <property type="protein sequence ID" value="CE23151"/>
    <property type="gene ID" value="WBGene00022389"/>
    <property type="gene designation" value="pde-6"/>
</dbReference>
<dbReference type="eggNOG" id="KOG1229">
    <property type="taxonomic scope" value="Eukaryota"/>
</dbReference>
<dbReference type="HOGENOM" id="CLU_005940_4_2_1"/>
<dbReference type="InParanoid" id="Q9N2V9"/>
<dbReference type="OMA" id="RWCCGGS"/>
<dbReference type="OrthoDB" id="189220at2759"/>
<dbReference type="PhylomeDB" id="Q9N2V9"/>
<dbReference type="Reactome" id="R-CEL-418555">
    <property type="pathway name" value="G alpha (s) signalling events"/>
</dbReference>
<dbReference type="PRO" id="PR:Q9N2V9"/>
<dbReference type="Proteomes" id="UP000001940">
    <property type="component" value="Chromosome I"/>
</dbReference>
<dbReference type="Bgee" id="WBGene00022389">
    <property type="expression patterns" value="Expressed in larva and 3 other cell types or tissues"/>
</dbReference>
<dbReference type="ExpressionAtlas" id="Q9N2V9">
    <property type="expression patterns" value="baseline and differential"/>
</dbReference>
<dbReference type="GO" id="GO:0004115">
    <property type="term" value="F:3',5'-cyclic-AMP phosphodiesterase activity"/>
    <property type="evidence" value="ECO:0000250"/>
    <property type="project" value="WormBase"/>
</dbReference>
<dbReference type="GO" id="GO:0047555">
    <property type="term" value="F:3',5'-cyclic-GMP phosphodiesterase activity"/>
    <property type="evidence" value="ECO:0000318"/>
    <property type="project" value="GO_Central"/>
</dbReference>
<dbReference type="GO" id="GO:0046872">
    <property type="term" value="F:metal ion binding"/>
    <property type="evidence" value="ECO:0007669"/>
    <property type="project" value="UniProtKB-KW"/>
</dbReference>
<dbReference type="GO" id="GO:0019933">
    <property type="term" value="P:cAMP-mediated signaling"/>
    <property type="evidence" value="ECO:0000318"/>
    <property type="project" value="GO_Central"/>
</dbReference>
<dbReference type="GO" id="GO:1900194">
    <property type="term" value="P:negative regulation of oocyte maturation"/>
    <property type="evidence" value="ECO:0000315"/>
    <property type="project" value="WormBase"/>
</dbReference>
<dbReference type="GO" id="GO:0070374">
    <property type="term" value="P:positive regulation of ERK1 and ERK2 cascade"/>
    <property type="evidence" value="ECO:0000318"/>
    <property type="project" value="GO_Central"/>
</dbReference>
<dbReference type="CDD" id="cd00077">
    <property type="entry name" value="HDc"/>
    <property type="match status" value="1"/>
</dbReference>
<dbReference type="FunFam" id="1.10.1300.10:FF:000020">
    <property type="entry name" value="Phosphodiesterase"/>
    <property type="match status" value="1"/>
</dbReference>
<dbReference type="Gene3D" id="1.10.1300.10">
    <property type="entry name" value="3'5'-cyclic nucleotide phosphodiesterase, catalytic domain"/>
    <property type="match status" value="1"/>
</dbReference>
<dbReference type="Gene3D" id="3.30.450.20">
    <property type="entry name" value="PAS domain"/>
    <property type="match status" value="1"/>
</dbReference>
<dbReference type="InterPro" id="IPR003607">
    <property type="entry name" value="HD/PDEase_dom"/>
</dbReference>
<dbReference type="InterPro" id="IPR035965">
    <property type="entry name" value="PAS-like_dom_sf"/>
</dbReference>
<dbReference type="InterPro" id="IPR023088">
    <property type="entry name" value="PDEase"/>
</dbReference>
<dbReference type="InterPro" id="IPR002073">
    <property type="entry name" value="PDEase_catalytic_dom"/>
</dbReference>
<dbReference type="InterPro" id="IPR036971">
    <property type="entry name" value="PDEase_catalytic_dom_sf"/>
</dbReference>
<dbReference type="InterPro" id="IPR023174">
    <property type="entry name" value="PDEase_CS"/>
</dbReference>
<dbReference type="PANTHER" id="PTHR11347">
    <property type="entry name" value="CYCLIC NUCLEOTIDE PHOSPHODIESTERASE"/>
    <property type="match status" value="1"/>
</dbReference>
<dbReference type="Pfam" id="PF00233">
    <property type="entry name" value="PDEase_I"/>
    <property type="match status" value="1"/>
</dbReference>
<dbReference type="PRINTS" id="PR00387">
    <property type="entry name" value="PDIESTERASE1"/>
</dbReference>
<dbReference type="SMART" id="SM00471">
    <property type="entry name" value="HDc"/>
    <property type="match status" value="1"/>
</dbReference>
<dbReference type="SUPFAM" id="SSF109604">
    <property type="entry name" value="HD-domain/PDEase-like"/>
    <property type="match status" value="1"/>
</dbReference>
<dbReference type="SUPFAM" id="SSF55785">
    <property type="entry name" value="PYP-like sensor domain (PAS domain)"/>
    <property type="match status" value="1"/>
</dbReference>
<dbReference type="PROSITE" id="PS00126">
    <property type="entry name" value="PDEASE_I_1"/>
    <property type="match status" value="1"/>
</dbReference>
<dbReference type="PROSITE" id="PS51845">
    <property type="entry name" value="PDEASE_I_2"/>
    <property type="match status" value="1"/>
</dbReference>
<proteinExistence type="inferred from homology"/>
<evidence type="ECO:0000250" key="1"/>
<evidence type="ECO:0000250" key="2">
    <source>
        <dbReference type="UniProtKB" id="P54750"/>
    </source>
</evidence>
<evidence type="ECO:0000255" key="3">
    <source>
        <dbReference type="PROSITE-ProRule" id="PRU01192"/>
    </source>
</evidence>
<evidence type="ECO:0000256" key="4">
    <source>
        <dbReference type="SAM" id="MobiDB-lite"/>
    </source>
</evidence>
<protein>
    <recommendedName>
        <fullName>Probable 3',5'-cyclic phosphodiesterase pde-6</fullName>
        <ecNumber>3.1.4.17</ecNumber>
    </recommendedName>
</protein>
<accession>Q9N2V9</accession>
<gene>
    <name type="primary">pde-6</name>
    <name type="ORF">Y95B8A.10</name>
</gene>
<sequence>MGDRSGVGGEEGEKSVLGASAHSQAGRRQQHTPAARRGAQRAPAATAAAASRPVFAMRWCCGGSYSENGGGGGGSRGAPPTPLLTVAATSSSTAHDTFGPMQVKMLKTAVIVTEGTGESVLLDSLRASGWICTVSFPTQATSDVESICPLAVFIDLRVPHPSQIAKDVSSVSTEEVLIVSIAEKHISEKRRRALAQSNIIHHVTWNTRDVVLFDYVGRLANRIRALPALFAVLDETDQAVEICDEQRVVQYVNRAYENVTGCIRSEVIGQPESEMRRKSLPRARGEEERRRSCDWKFIRVPFANNSQFVYMKRSNTTGDTAAIFRDVSLKSLKSQTGGIEAPISEVLTMLRDVSARVDGEPAQTIKDAMKVLSSHELYAPSINRFRDADRIATQYYDGLIRLHHPARQRKRSVVDAHREKRGSHGERRRVSADVKNALENDNCWKFDILHLEKVSDHHALSQVGMKVFERWKVCDVLGCSDDLLHRWILSIEAHYHAGNTYHNATHAADVLQATSFFLDSPSVAVHVNESHAVAALLAAAVHDLDHPGRGNAYLINTRQSLAILYNDNSILENHHIALAFQLTLQHNANVNIFSSLSREEFIQMRHAMVEMVLATDISRHFEYLAKFNKMHVTDVPEEQRDTNSLTICDMLVKCADISNPAREWGLCQRWAHRIVEEYFEQTREEKEKGLPVTMEVFDRNTCNVPITQCGFIDMFAREAFATFTEFAKLGELSDQLESNYEKWKVMTSQWTPTHNTNLVL</sequence>
<feature type="chain" id="PRO_0000198849" description="Probable 3',5'-cyclic phosphodiesterase pde-6">
    <location>
        <begin position="1"/>
        <end position="760"/>
    </location>
</feature>
<feature type="domain" description="PDEase" evidence="3">
    <location>
        <begin position="426"/>
        <end position="750"/>
    </location>
</feature>
<feature type="region of interest" description="Disordered" evidence="4">
    <location>
        <begin position="1"/>
        <end position="47"/>
    </location>
</feature>
<feature type="region of interest" description="Disordered" evidence="4">
    <location>
        <begin position="410"/>
        <end position="429"/>
    </location>
</feature>
<feature type="compositionally biased region" description="Low complexity" evidence="4">
    <location>
        <begin position="33"/>
        <end position="47"/>
    </location>
</feature>
<feature type="compositionally biased region" description="Basic and acidic residues" evidence="4">
    <location>
        <begin position="412"/>
        <end position="429"/>
    </location>
</feature>
<feature type="active site" description="Proton donor" evidence="1">
    <location>
        <position position="502"/>
    </location>
</feature>
<feature type="binding site" evidence="1">
    <location>
        <position position="506"/>
    </location>
    <ligand>
        <name>a divalent metal cation</name>
        <dbReference type="ChEBI" id="CHEBI:60240"/>
        <label>1</label>
    </ligand>
</feature>
<feature type="binding site" evidence="1">
    <location>
        <position position="542"/>
    </location>
    <ligand>
        <name>a divalent metal cation</name>
        <dbReference type="ChEBI" id="CHEBI:60240"/>
        <label>1</label>
    </ligand>
</feature>
<feature type="binding site" evidence="1">
    <location>
        <position position="543"/>
    </location>
    <ligand>
        <name>a divalent metal cation</name>
        <dbReference type="ChEBI" id="CHEBI:60240"/>
        <label>1</label>
    </ligand>
</feature>
<feature type="binding site" evidence="1">
    <location>
        <position position="543"/>
    </location>
    <ligand>
        <name>a divalent metal cation</name>
        <dbReference type="ChEBI" id="CHEBI:60240"/>
        <label>2</label>
    </ligand>
</feature>
<feature type="binding site" evidence="1">
    <location>
        <position position="656"/>
    </location>
    <ligand>
        <name>a divalent metal cation</name>
        <dbReference type="ChEBI" id="CHEBI:60240"/>
        <label>1</label>
    </ligand>
</feature>
<name>PDE6_CAEEL</name>
<organism>
    <name type="scientific">Caenorhabditis elegans</name>
    <dbReference type="NCBI Taxonomy" id="6239"/>
    <lineage>
        <taxon>Eukaryota</taxon>
        <taxon>Metazoa</taxon>
        <taxon>Ecdysozoa</taxon>
        <taxon>Nematoda</taxon>
        <taxon>Chromadorea</taxon>
        <taxon>Rhabditida</taxon>
        <taxon>Rhabditina</taxon>
        <taxon>Rhabditomorpha</taxon>
        <taxon>Rhabditoidea</taxon>
        <taxon>Rhabditidae</taxon>
        <taxon>Peloderinae</taxon>
        <taxon>Caenorhabditis</taxon>
    </lineage>
</organism>
<keyword id="KW-0140">cGMP</keyword>
<keyword id="KW-0378">Hydrolase</keyword>
<keyword id="KW-0479">Metal-binding</keyword>
<keyword id="KW-1185">Reference proteome</keyword>
<reference key="1">
    <citation type="journal article" date="1998" name="Science">
        <title>Genome sequence of the nematode C. elegans: a platform for investigating biology.</title>
        <authorList>
            <consortium name="The C. elegans sequencing consortium"/>
        </authorList>
    </citation>
    <scope>NUCLEOTIDE SEQUENCE [LARGE SCALE GENOMIC DNA]</scope>
    <source>
        <strain>Bristol N2</strain>
    </source>
</reference>
<comment type="catalytic activity">
    <reaction evidence="2">
        <text>a nucleoside 3',5'-cyclic phosphate + H2O = a nucleoside 5'-phosphate + H(+)</text>
        <dbReference type="Rhea" id="RHEA:14653"/>
        <dbReference type="ChEBI" id="CHEBI:15377"/>
        <dbReference type="ChEBI" id="CHEBI:15378"/>
        <dbReference type="ChEBI" id="CHEBI:57867"/>
        <dbReference type="ChEBI" id="CHEBI:58464"/>
        <dbReference type="EC" id="3.1.4.17"/>
    </reaction>
</comment>
<comment type="cofactor">
    <cofactor evidence="1">
        <name>a divalent metal cation</name>
        <dbReference type="ChEBI" id="CHEBI:60240"/>
    </cofactor>
    <text evidence="1">Binds 2 divalent metal cations per subunit. Site 1 may preferentially bind zinc ions, while site 2 has a preference for magnesium and/or manganese ions.</text>
</comment>
<comment type="similarity">
    <text evidence="2">Belongs to the cyclic nucleotide phosphodiesterase family.</text>
</comment>